<organism>
    <name type="scientific">Methanothrix thermoacetophila (strain DSM 6194 / JCM 14653 / NBRC 101360 / PT)</name>
    <name type="common">Methanosaeta thermophila</name>
    <dbReference type="NCBI Taxonomy" id="349307"/>
    <lineage>
        <taxon>Archaea</taxon>
        <taxon>Methanobacteriati</taxon>
        <taxon>Methanobacteriota</taxon>
        <taxon>Stenosarchaea group</taxon>
        <taxon>Methanomicrobia</taxon>
        <taxon>Methanotrichales</taxon>
        <taxon>Methanotrichaceae</taxon>
        <taxon>Methanothrix</taxon>
    </lineage>
</organism>
<keyword id="KW-0067">ATP-binding</keyword>
<keyword id="KW-0436">Ligase</keyword>
<keyword id="KW-0460">Magnesium</keyword>
<keyword id="KW-0464">Manganese</keyword>
<keyword id="KW-0479">Metal-binding</keyword>
<keyword id="KW-0547">Nucleotide-binding</keyword>
<keyword id="KW-0658">Purine biosynthesis</keyword>
<keyword id="KW-1185">Reference proteome</keyword>
<gene>
    <name evidence="2" type="primary">purP</name>
    <name type="ordered locus">Mthe_0184</name>
</gene>
<reference key="1">
    <citation type="submission" date="2006-10" db="EMBL/GenBank/DDBJ databases">
        <title>Complete sequence of Methanosaeta thermophila PT.</title>
        <authorList>
            <consortium name="US DOE Joint Genome Institute"/>
            <person name="Copeland A."/>
            <person name="Lucas S."/>
            <person name="Lapidus A."/>
            <person name="Barry K."/>
            <person name="Detter J.C."/>
            <person name="Glavina del Rio T."/>
            <person name="Hammon N."/>
            <person name="Israni S."/>
            <person name="Pitluck S."/>
            <person name="Chain P."/>
            <person name="Malfatti S."/>
            <person name="Shin M."/>
            <person name="Vergez L."/>
            <person name="Schmutz J."/>
            <person name="Larimer F."/>
            <person name="Land M."/>
            <person name="Hauser L."/>
            <person name="Kyrpides N."/>
            <person name="Kim E."/>
            <person name="Smith K.S."/>
            <person name="Ingram-Smith C."/>
            <person name="Richardson P."/>
        </authorList>
    </citation>
    <scope>NUCLEOTIDE SEQUENCE [LARGE SCALE GENOMIC DNA]</scope>
    <source>
        <strain>DSM 6194 / JCM 14653 / NBRC 101360 / PT</strain>
    </source>
</reference>
<protein>
    <recommendedName>
        <fullName evidence="2">5-formaminoimidazole-4-carboxamide-1-(beta)-D-ribofuranosyl 5'-monophosphate synthetase</fullName>
        <ecNumber evidence="2">6.3.4.23</ecNumber>
    </recommendedName>
    <alternativeName>
        <fullName evidence="2">5-aminoimidazole-4-carboxamide-1-beta-D-ribofuranosyl 5'-monophosphate--formate ligase</fullName>
    </alternativeName>
</protein>
<feature type="chain" id="PRO_0000348624" description="5-formaminoimidazole-4-carboxamide-1-(beta)-D-ribofuranosyl 5'-monophosphate synthetase">
    <location>
        <begin position="1"/>
        <end position="356"/>
    </location>
</feature>
<feature type="domain" description="ATP-grasp" evidence="2">
    <location>
        <begin position="116"/>
        <end position="333"/>
    </location>
</feature>
<feature type="binding site" evidence="2">
    <location>
        <position position="27"/>
    </location>
    <ligand>
        <name>5-amino-1-(5-phospho-beta-D-ribosyl)imidazole-4-carboxamide</name>
        <dbReference type="ChEBI" id="CHEBI:58475"/>
    </ligand>
</feature>
<feature type="binding site" evidence="2">
    <location>
        <position position="94"/>
    </location>
    <ligand>
        <name>5-amino-1-(5-phospho-beta-D-ribosyl)imidazole-4-carboxamide</name>
        <dbReference type="ChEBI" id="CHEBI:58475"/>
    </ligand>
</feature>
<feature type="binding site" evidence="2">
    <location>
        <begin position="145"/>
        <end position="196"/>
    </location>
    <ligand>
        <name>ATP</name>
        <dbReference type="ChEBI" id="CHEBI:30616"/>
    </ligand>
</feature>
<feature type="binding site" evidence="2">
    <location>
        <position position="226"/>
    </location>
    <ligand>
        <name>ATP</name>
        <dbReference type="ChEBI" id="CHEBI:30616"/>
    </ligand>
</feature>
<feature type="binding site" evidence="2">
    <location>
        <position position="255"/>
    </location>
    <ligand>
        <name>5-amino-1-(5-phospho-beta-D-ribosyl)imidazole-4-carboxamide</name>
        <dbReference type="ChEBI" id="CHEBI:58475"/>
    </ligand>
</feature>
<feature type="binding site" evidence="2">
    <location>
        <position position="293"/>
    </location>
    <ligand>
        <name>Mg(2+)</name>
        <dbReference type="ChEBI" id="CHEBI:18420"/>
    </ligand>
</feature>
<feature type="binding site" evidence="2">
    <location>
        <position position="306"/>
    </location>
    <ligand>
        <name>Mg(2+)</name>
        <dbReference type="ChEBI" id="CHEBI:18420"/>
    </ligand>
</feature>
<evidence type="ECO:0000250" key="1"/>
<evidence type="ECO:0000255" key="2">
    <source>
        <dbReference type="HAMAP-Rule" id="MF_01163"/>
    </source>
</evidence>
<proteinExistence type="inferred from homology"/>
<name>PURP_METTP</name>
<dbReference type="EC" id="6.3.4.23" evidence="2"/>
<dbReference type="EMBL" id="CP000477">
    <property type="protein sequence ID" value="ABK13983.1"/>
    <property type="molecule type" value="Genomic_DNA"/>
</dbReference>
<dbReference type="RefSeq" id="WP_011695382.1">
    <property type="nucleotide sequence ID" value="NC_008553.1"/>
</dbReference>
<dbReference type="SMR" id="A0B5K9"/>
<dbReference type="STRING" id="349307.Mthe_0184"/>
<dbReference type="GeneID" id="4462751"/>
<dbReference type="KEGG" id="mtp:Mthe_0184"/>
<dbReference type="HOGENOM" id="CLU_065084_0_0_2"/>
<dbReference type="OrthoDB" id="98133at2157"/>
<dbReference type="UniPathway" id="UPA00074">
    <property type="reaction ID" value="UER00134"/>
</dbReference>
<dbReference type="Proteomes" id="UP000000674">
    <property type="component" value="Chromosome"/>
</dbReference>
<dbReference type="GO" id="GO:0005524">
    <property type="term" value="F:ATP binding"/>
    <property type="evidence" value="ECO:0007669"/>
    <property type="project" value="UniProtKB-KW"/>
</dbReference>
<dbReference type="GO" id="GO:0016879">
    <property type="term" value="F:ligase activity, forming carbon-nitrogen bonds"/>
    <property type="evidence" value="ECO:0007669"/>
    <property type="project" value="UniProtKB-UniRule"/>
</dbReference>
<dbReference type="GO" id="GO:0000287">
    <property type="term" value="F:magnesium ion binding"/>
    <property type="evidence" value="ECO:0007669"/>
    <property type="project" value="InterPro"/>
</dbReference>
<dbReference type="GO" id="GO:0006189">
    <property type="term" value="P:'de novo' IMP biosynthetic process"/>
    <property type="evidence" value="ECO:0007669"/>
    <property type="project" value="UniProtKB-UniRule"/>
</dbReference>
<dbReference type="Gene3D" id="3.40.50.20">
    <property type="match status" value="1"/>
</dbReference>
<dbReference type="Gene3D" id="3.30.1490.20">
    <property type="entry name" value="ATP-grasp fold, A domain"/>
    <property type="match status" value="1"/>
</dbReference>
<dbReference type="Gene3D" id="3.30.470.20">
    <property type="entry name" value="ATP-grasp fold, B domain"/>
    <property type="match status" value="1"/>
</dbReference>
<dbReference type="HAMAP" id="MF_01163">
    <property type="entry name" value="IMP_biosynth_PurP"/>
    <property type="match status" value="1"/>
</dbReference>
<dbReference type="InterPro" id="IPR011761">
    <property type="entry name" value="ATP-grasp"/>
</dbReference>
<dbReference type="InterPro" id="IPR013815">
    <property type="entry name" value="ATP_grasp_subdomain_1"/>
</dbReference>
<dbReference type="InterPro" id="IPR023656">
    <property type="entry name" value="IMP_biosynth_PurP"/>
</dbReference>
<dbReference type="InterPro" id="IPR009720">
    <property type="entry name" value="IMP_biosynth_PurP_C"/>
</dbReference>
<dbReference type="InterPro" id="IPR010672">
    <property type="entry name" value="IMP_biosynth_PurP_N"/>
</dbReference>
<dbReference type="InterPro" id="IPR016185">
    <property type="entry name" value="PreATP-grasp_dom_sf"/>
</dbReference>
<dbReference type="NCBIfam" id="NF009781">
    <property type="entry name" value="PRK13278.1-6"/>
    <property type="match status" value="1"/>
</dbReference>
<dbReference type="PANTHER" id="PTHR38147:SF2">
    <property type="entry name" value="5-FORMAMINOIMIDAZOLE-4-CARBOXAMIDE-1-(BETA)-D-RIBOFURANOSYL 5'-MONOPHOSPHATE SYNTHETASE"/>
    <property type="match status" value="1"/>
</dbReference>
<dbReference type="PANTHER" id="PTHR38147">
    <property type="entry name" value="5-FORMAMINOIMIDAZOLE-4-CARBOXAMIDE-1-(BETA)-D-RIBOFURANOSYL 5'-MONOPHOSPHATE SYNTHETASE-RELATED"/>
    <property type="match status" value="1"/>
</dbReference>
<dbReference type="Pfam" id="PF06849">
    <property type="entry name" value="DUF1246"/>
    <property type="match status" value="1"/>
</dbReference>
<dbReference type="Pfam" id="PF06973">
    <property type="entry name" value="DUF1297"/>
    <property type="match status" value="1"/>
</dbReference>
<dbReference type="PIRSF" id="PIRSF004602">
    <property type="entry name" value="ATPgrasp_PurP"/>
    <property type="match status" value="1"/>
</dbReference>
<dbReference type="SUPFAM" id="SSF56059">
    <property type="entry name" value="Glutathione synthetase ATP-binding domain-like"/>
    <property type="match status" value="1"/>
</dbReference>
<dbReference type="SUPFAM" id="SSF52440">
    <property type="entry name" value="PreATP-grasp domain"/>
    <property type="match status" value="1"/>
</dbReference>
<dbReference type="PROSITE" id="PS50975">
    <property type="entry name" value="ATP_GRASP"/>
    <property type="match status" value="1"/>
</dbReference>
<sequence length="356" mass="39965">MISKEEILEILNGYDLKNITIATVCSHSSLQIFHGAKQEGFRTLGICIGPPPRFYDAFPLAKPDAFISLDSYKAMLDESDRLIDENAIIIPHGSMVEYLGIQNFEALPVPTFGNRRCLAWESDREMEREWLLRAGVNVPMRFENAELIDRPVIVKYHGAKGGKGFFIAKNKEEFQSKIQQGQKYTIQEFILGTRYYIHFFYSPIREKGYRLRKGTLDMLGIDRRVESNADEIFRIGSVNELEAAGIYPSFVVTGNLPLVLRESLLPKVFDLGERVVETSIELFGGMVGPFSLETIVTDDLDFKVFEISARIVAGTNLFISGSPYSDLIEKGLSTGRRIAQEIALARSMGALGEVIS</sequence>
<comment type="function">
    <text evidence="2">Catalyzes the ATP- and formate-dependent formylation of 5-aminoimidazole-4-carboxamide-1-beta-d-ribofuranosyl 5'-monophosphate (AICAR) to 5-formaminoimidazole-4-carboxamide-1-beta-d-ribofuranosyl 5'-monophosphate (FAICAR) in the absence of folates.</text>
</comment>
<comment type="catalytic activity">
    <reaction evidence="2">
        <text>5-amino-1-(5-phospho-beta-D-ribosyl)imidazole-4-carboxamide + formate + ATP = 5-formamido-1-(5-phospho-D-ribosyl)imidazole-4-carboxamide + ADP + phosphate</text>
        <dbReference type="Rhea" id="RHEA:24836"/>
        <dbReference type="ChEBI" id="CHEBI:15740"/>
        <dbReference type="ChEBI" id="CHEBI:30616"/>
        <dbReference type="ChEBI" id="CHEBI:43474"/>
        <dbReference type="ChEBI" id="CHEBI:58467"/>
        <dbReference type="ChEBI" id="CHEBI:58475"/>
        <dbReference type="ChEBI" id="CHEBI:456216"/>
        <dbReference type="EC" id="6.3.4.23"/>
    </reaction>
</comment>
<comment type="cofactor">
    <cofactor evidence="1">
        <name>Mg(2+)</name>
        <dbReference type="ChEBI" id="CHEBI:18420"/>
    </cofactor>
    <cofactor evidence="1">
        <name>Mn(2+)</name>
        <dbReference type="ChEBI" id="CHEBI:29035"/>
    </cofactor>
    <text evidence="1">Binds 1 Mg(2+) or Mn(2+) ion per subunit.</text>
</comment>
<comment type="pathway">
    <text evidence="2">Purine metabolism; IMP biosynthesis via de novo pathway; 5-formamido-1-(5-phospho-D-ribosyl)imidazole-4-carboxamide from 5-amino-1-(5-phospho-D-ribosyl)imidazole-4-carboxamide (formate route): step 1/1.</text>
</comment>
<comment type="similarity">
    <text evidence="2">Belongs to the phosphohexose mutase family.</text>
</comment>
<accession>A0B5K9</accession>